<reference key="1">
    <citation type="journal article" date="2005" name="BMC Genomics">
        <title>Bacterial genome adaptation to niches: divergence of the potential virulence genes in three Burkholderia species of different survival strategies.</title>
        <authorList>
            <person name="Kim H.S."/>
            <person name="Schell M.A."/>
            <person name="Yu Y."/>
            <person name="Ulrich R.L."/>
            <person name="Sarria S.H."/>
            <person name="Nierman W.C."/>
            <person name="DeShazer D."/>
        </authorList>
    </citation>
    <scope>NUCLEOTIDE SEQUENCE [LARGE SCALE GENOMIC DNA]</scope>
    <source>
        <strain>ATCC 700388 / DSM 13276 / CCUG 48851 / CIP 106301 / E264</strain>
    </source>
</reference>
<organism>
    <name type="scientific">Burkholderia thailandensis (strain ATCC 700388 / DSM 13276 / CCUG 48851 / CIP 106301 / E264)</name>
    <dbReference type="NCBI Taxonomy" id="271848"/>
    <lineage>
        <taxon>Bacteria</taxon>
        <taxon>Pseudomonadati</taxon>
        <taxon>Pseudomonadota</taxon>
        <taxon>Betaproteobacteria</taxon>
        <taxon>Burkholderiales</taxon>
        <taxon>Burkholderiaceae</taxon>
        <taxon>Burkholderia</taxon>
        <taxon>pseudomallei group</taxon>
    </lineage>
</organism>
<sequence length="369" mass="39273">MSGNTLGTLFTVTTFGESHGPAIGCVIDGCPPGMALTEADVQLELDRRKPGTSRHVTQRQEPDQVEILSGVFEGVTTGAPIALLIRNTDQRSKDYGNIVETFRPGHADYTYWQKYGVRDYRGGGRSSARLTAPVVGAGAIAKKWLRERFGVEVRGYMSALGEIEIPFVDWSHVRENPFFAPNADIVPQLEGYMDALRKDGDSIGARIDVVASGVPVGWGEPLFDRLDADIAHAMMGINAVKGVEIGAGFASVAQRGSVHGDELTPDGFVGNHAGGVLGGISTGQDITVSIAIKPTSSIRTPRRSITKAGEPAVIETFGRHDPCVGIRATPIAESMLALVLIDHALRHRAQCGDVSTATPKIAARAPQAQ</sequence>
<evidence type="ECO:0000255" key="1">
    <source>
        <dbReference type="HAMAP-Rule" id="MF_00300"/>
    </source>
</evidence>
<feature type="chain" id="PRO_0000256280" description="Chorismate synthase">
    <location>
        <begin position="1"/>
        <end position="369"/>
    </location>
</feature>
<feature type="binding site" evidence="1">
    <location>
        <position position="48"/>
    </location>
    <ligand>
        <name>NADP(+)</name>
        <dbReference type="ChEBI" id="CHEBI:58349"/>
    </ligand>
</feature>
<feature type="binding site" evidence="1">
    <location>
        <position position="54"/>
    </location>
    <ligand>
        <name>NADP(+)</name>
        <dbReference type="ChEBI" id="CHEBI:58349"/>
    </ligand>
</feature>
<feature type="binding site" evidence="1">
    <location>
        <begin position="125"/>
        <end position="127"/>
    </location>
    <ligand>
        <name>FMN</name>
        <dbReference type="ChEBI" id="CHEBI:58210"/>
    </ligand>
</feature>
<feature type="binding site" evidence="1">
    <location>
        <begin position="238"/>
        <end position="239"/>
    </location>
    <ligand>
        <name>FMN</name>
        <dbReference type="ChEBI" id="CHEBI:58210"/>
    </ligand>
</feature>
<feature type="binding site" evidence="1">
    <location>
        <position position="278"/>
    </location>
    <ligand>
        <name>FMN</name>
        <dbReference type="ChEBI" id="CHEBI:58210"/>
    </ligand>
</feature>
<feature type="binding site" evidence="1">
    <location>
        <begin position="293"/>
        <end position="297"/>
    </location>
    <ligand>
        <name>FMN</name>
        <dbReference type="ChEBI" id="CHEBI:58210"/>
    </ligand>
</feature>
<feature type="binding site" evidence="1">
    <location>
        <position position="319"/>
    </location>
    <ligand>
        <name>FMN</name>
        <dbReference type="ChEBI" id="CHEBI:58210"/>
    </ligand>
</feature>
<protein>
    <recommendedName>
        <fullName evidence="1">Chorismate synthase</fullName>
        <shortName evidence="1">CS</shortName>
        <ecNumber evidence="1">4.2.3.5</ecNumber>
    </recommendedName>
    <alternativeName>
        <fullName evidence="1">5-enolpyruvylshikimate-3-phosphate phospholyase</fullName>
    </alternativeName>
</protein>
<keyword id="KW-0028">Amino-acid biosynthesis</keyword>
<keyword id="KW-0057">Aromatic amino acid biosynthesis</keyword>
<keyword id="KW-0274">FAD</keyword>
<keyword id="KW-0285">Flavoprotein</keyword>
<keyword id="KW-0288">FMN</keyword>
<keyword id="KW-0456">Lyase</keyword>
<keyword id="KW-0521">NADP</keyword>
<comment type="function">
    <text evidence="1">Catalyzes the anti-1,4-elimination of the C-3 phosphate and the C-6 proR hydrogen from 5-enolpyruvylshikimate-3-phosphate (EPSP) to yield chorismate, which is the branch point compound that serves as the starting substrate for the three terminal pathways of aromatic amino acid biosynthesis. This reaction introduces a second double bond into the aromatic ring system.</text>
</comment>
<comment type="catalytic activity">
    <reaction evidence="1">
        <text>5-O-(1-carboxyvinyl)-3-phosphoshikimate = chorismate + phosphate</text>
        <dbReference type="Rhea" id="RHEA:21020"/>
        <dbReference type="ChEBI" id="CHEBI:29748"/>
        <dbReference type="ChEBI" id="CHEBI:43474"/>
        <dbReference type="ChEBI" id="CHEBI:57701"/>
        <dbReference type="EC" id="4.2.3.5"/>
    </reaction>
</comment>
<comment type="cofactor">
    <cofactor evidence="1">
        <name>FMNH2</name>
        <dbReference type="ChEBI" id="CHEBI:57618"/>
    </cofactor>
    <text evidence="1">Reduced FMN (FMNH(2)).</text>
</comment>
<comment type="pathway">
    <text evidence="1">Metabolic intermediate biosynthesis; chorismate biosynthesis; chorismate from D-erythrose 4-phosphate and phosphoenolpyruvate: step 7/7.</text>
</comment>
<comment type="subunit">
    <text evidence="1">Homotetramer.</text>
</comment>
<comment type="similarity">
    <text evidence="1">Belongs to the chorismate synthase family.</text>
</comment>
<gene>
    <name evidence="1" type="primary">aroC</name>
    <name type="ordered locus">BTH_I2614</name>
</gene>
<dbReference type="EC" id="4.2.3.5" evidence="1"/>
<dbReference type="EMBL" id="CP000086">
    <property type="protein sequence ID" value="ABC37672.1"/>
    <property type="molecule type" value="Genomic_DNA"/>
</dbReference>
<dbReference type="RefSeq" id="WP_009891609.1">
    <property type="nucleotide sequence ID" value="NC_007651.1"/>
</dbReference>
<dbReference type="SMR" id="Q2SVC0"/>
<dbReference type="GeneID" id="45122320"/>
<dbReference type="KEGG" id="bte:BTH_I2614"/>
<dbReference type="HOGENOM" id="CLU_034547_0_2_4"/>
<dbReference type="UniPathway" id="UPA00053">
    <property type="reaction ID" value="UER00090"/>
</dbReference>
<dbReference type="Proteomes" id="UP000001930">
    <property type="component" value="Chromosome I"/>
</dbReference>
<dbReference type="GO" id="GO:0005829">
    <property type="term" value="C:cytosol"/>
    <property type="evidence" value="ECO:0007669"/>
    <property type="project" value="TreeGrafter"/>
</dbReference>
<dbReference type="GO" id="GO:0004107">
    <property type="term" value="F:chorismate synthase activity"/>
    <property type="evidence" value="ECO:0007669"/>
    <property type="project" value="UniProtKB-UniRule"/>
</dbReference>
<dbReference type="GO" id="GO:0010181">
    <property type="term" value="F:FMN binding"/>
    <property type="evidence" value="ECO:0007669"/>
    <property type="project" value="TreeGrafter"/>
</dbReference>
<dbReference type="GO" id="GO:0008652">
    <property type="term" value="P:amino acid biosynthetic process"/>
    <property type="evidence" value="ECO:0007669"/>
    <property type="project" value="UniProtKB-KW"/>
</dbReference>
<dbReference type="GO" id="GO:0009073">
    <property type="term" value="P:aromatic amino acid family biosynthetic process"/>
    <property type="evidence" value="ECO:0007669"/>
    <property type="project" value="UniProtKB-KW"/>
</dbReference>
<dbReference type="GO" id="GO:0009423">
    <property type="term" value="P:chorismate biosynthetic process"/>
    <property type="evidence" value="ECO:0007669"/>
    <property type="project" value="UniProtKB-UniRule"/>
</dbReference>
<dbReference type="CDD" id="cd07304">
    <property type="entry name" value="Chorismate_synthase"/>
    <property type="match status" value="1"/>
</dbReference>
<dbReference type="FunFam" id="3.60.150.10:FF:000001">
    <property type="entry name" value="Chorismate synthase"/>
    <property type="match status" value="1"/>
</dbReference>
<dbReference type="Gene3D" id="3.60.150.10">
    <property type="entry name" value="Chorismate synthase AroC"/>
    <property type="match status" value="1"/>
</dbReference>
<dbReference type="HAMAP" id="MF_00300">
    <property type="entry name" value="Chorismate_synth"/>
    <property type="match status" value="1"/>
</dbReference>
<dbReference type="InterPro" id="IPR000453">
    <property type="entry name" value="Chorismate_synth"/>
</dbReference>
<dbReference type="InterPro" id="IPR035904">
    <property type="entry name" value="Chorismate_synth_AroC_sf"/>
</dbReference>
<dbReference type="InterPro" id="IPR020541">
    <property type="entry name" value="Chorismate_synthase_CS"/>
</dbReference>
<dbReference type="NCBIfam" id="TIGR00033">
    <property type="entry name" value="aroC"/>
    <property type="match status" value="1"/>
</dbReference>
<dbReference type="NCBIfam" id="NF003793">
    <property type="entry name" value="PRK05382.1"/>
    <property type="match status" value="1"/>
</dbReference>
<dbReference type="PANTHER" id="PTHR21085">
    <property type="entry name" value="CHORISMATE SYNTHASE"/>
    <property type="match status" value="1"/>
</dbReference>
<dbReference type="PANTHER" id="PTHR21085:SF0">
    <property type="entry name" value="CHORISMATE SYNTHASE"/>
    <property type="match status" value="1"/>
</dbReference>
<dbReference type="Pfam" id="PF01264">
    <property type="entry name" value="Chorismate_synt"/>
    <property type="match status" value="1"/>
</dbReference>
<dbReference type="PIRSF" id="PIRSF001456">
    <property type="entry name" value="Chorismate_synth"/>
    <property type="match status" value="1"/>
</dbReference>
<dbReference type="SUPFAM" id="SSF103263">
    <property type="entry name" value="Chorismate synthase, AroC"/>
    <property type="match status" value="1"/>
</dbReference>
<dbReference type="PROSITE" id="PS00787">
    <property type="entry name" value="CHORISMATE_SYNTHASE_1"/>
    <property type="match status" value="1"/>
</dbReference>
<dbReference type="PROSITE" id="PS00788">
    <property type="entry name" value="CHORISMATE_SYNTHASE_2"/>
    <property type="match status" value="1"/>
</dbReference>
<dbReference type="PROSITE" id="PS00789">
    <property type="entry name" value="CHORISMATE_SYNTHASE_3"/>
    <property type="match status" value="1"/>
</dbReference>
<name>AROC_BURTA</name>
<accession>Q2SVC0</accession>
<proteinExistence type="inferred from homology"/>